<gene>
    <name evidence="2" type="primary">tuf</name>
    <name type="ordered locus">BB_0476</name>
</gene>
<comment type="function">
    <text evidence="2">GTP hydrolase that promotes the GTP-dependent binding of aminoacyl-tRNA to the A-site of ribosomes during protein biosynthesis.</text>
</comment>
<comment type="catalytic activity">
    <reaction evidence="2">
        <text>GTP + H2O = GDP + phosphate + H(+)</text>
        <dbReference type="Rhea" id="RHEA:19669"/>
        <dbReference type="ChEBI" id="CHEBI:15377"/>
        <dbReference type="ChEBI" id="CHEBI:15378"/>
        <dbReference type="ChEBI" id="CHEBI:37565"/>
        <dbReference type="ChEBI" id="CHEBI:43474"/>
        <dbReference type="ChEBI" id="CHEBI:58189"/>
        <dbReference type="EC" id="3.6.5.3"/>
    </reaction>
    <physiologicalReaction direction="left-to-right" evidence="2">
        <dbReference type="Rhea" id="RHEA:19670"/>
    </physiologicalReaction>
</comment>
<comment type="subunit">
    <text evidence="2">Monomer.</text>
</comment>
<comment type="subcellular location">
    <subcellularLocation>
        <location evidence="2">Cytoplasm</location>
    </subcellularLocation>
</comment>
<comment type="similarity">
    <text evidence="2">Belongs to the TRAFAC class translation factor GTPase superfamily. Classic translation factor GTPase family. EF-Tu/EF-1A subfamily.</text>
</comment>
<sequence>MAKEVFQRTKPHMNVGTIGHVDHGKTTLTAAISIYCSKLNKDAKALKYEDIDNAPEEKARGITINARHIEYETANRHYAHVDCPGHADYIKNMITGAAQMDAAILLVAADSGAEPQTKEHLLLAQRMGIKKIIVFLNKLDLADPELVELVEVEVLELVEKYGFSADTPIIKGSAFGAMSNPEDPESTKCVKELLESMDNYFDLPERDIDKPFLLAVEDVFSISGRGTVATGRIERGIIKVGQEVEIVGIKETRKTTVTGVEMFQKILEQGQAGDNVGLLLRGVDKKDIERGQVLSAPGTITPHKKFKASIYCLTKEEGGRHKPFFPGYRPQFFFRTTDVTGVVALEGKEMVMPGDNVDIIVELISSIAMDKNVEFAVREGGRTVASGRILEILE</sequence>
<dbReference type="EC" id="3.6.5.3" evidence="2"/>
<dbReference type="EMBL" id="L23125">
    <property type="protein sequence ID" value="AAA22962.1"/>
    <property type="molecule type" value="Genomic_DNA"/>
</dbReference>
<dbReference type="EMBL" id="U78193">
    <property type="protein sequence ID" value="AAB36820.1"/>
    <property type="molecule type" value="Genomic_DNA"/>
</dbReference>
<dbReference type="EMBL" id="AE000783">
    <property type="protein sequence ID" value="AAC66866.2"/>
    <property type="molecule type" value="Genomic_DNA"/>
</dbReference>
<dbReference type="PIR" id="C70159">
    <property type="entry name" value="C70159"/>
</dbReference>
<dbReference type="RefSeq" id="NP_212610.2">
    <property type="nucleotide sequence ID" value="NC_001318.1"/>
</dbReference>
<dbReference type="RefSeq" id="WP_002657015.1">
    <property type="nucleotide sequence ID" value="NC_001318.1"/>
</dbReference>
<dbReference type="SMR" id="P50062"/>
<dbReference type="STRING" id="224326.BB_0476"/>
<dbReference type="PaxDb" id="224326-BB_0476"/>
<dbReference type="EnsemblBacteria" id="AAC66866">
    <property type="protein sequence ID" value="AAC66866"/>
    <property type="gene ID" value="BB_0476"/>
</dbReference>
<dbReference type="GeneID" id="56567911"/>
<dbReference type="KEGG" id="bbu:BB_0476"/>
<dbReference type="PATRIC" id="fig|224326.49.peg.867"/>
<dbReference type="HOGENOM" id="CLU_007265_0_0_12"/>
<dbReference type="OrthoDB" id="9804504at2"/>
<dbReference type="Proteomes" id="UP000001807">
    <property type="component" value="Chromosome"/>
</dbReference>
<dbReference type="GO" id="GO:0005829">
    <property type="term" value="C:cytosol"/>
    <property type="evidence" value="ECO:0000314"/>
    <property type="project" value="CAFA"/>
</dbReference>
<dbReference type="GO" id="GO:0005525">
    <property type="term" value="F:GTP binding"/>
    <property type="evidence" value="ECO:0007669"/>
    <property type="project" value="UniProtKB-UniRule"/>
</dbReference>
<dbReference type="GO" id="GO:0003924">
    <property type="term" value="F:GTPase activity"/>
    <property type="evidence" value="ECO:0007669"/>
    <property type="project" value="InterPro"/>
</dbReference>
<dbReference type="GO" id="GO:0003746">
    <property type="term" value="F:translation elongation factor activity"/>
    <property type="evidence" value="ECO:0007669"/>
    <property type="project" value="UniProtKB-UniRule"/>
</dbReference>
<dbReference type="CDD" id="cd01884">
    <property type="entry name" value="EF_Tu"/>
    <property type="match status" value="1"/>
</dbReference>
<dbReference type="CDD" id="cd03697">
    <property type="entry name" value="EFTU_II"/>
    <property type="match status" value="1"/>
</dbReference>
<dbReference type="CDD" id="cd03707">
    <property type="entry name" value="EFTU_III"/>
    <property type="match status" value="1"/>
</dbReference>
<dbReference type="FunFam" id="2.40.30.10:FF:000001">
    <property type="entry name" value="Elongation factor Tu"/>
    <property type="match status" value="1"/>
</dbReference>
<dbReference type="FunFam" id="3.40.50.300:FF:000576">
    <property type="entry name" value="Elongation factor Tu"/>
    <property type="match status" value="1"/>
</dbReference>
<dbReference type="Gene3D" id="3.40.50.300">
    <property type="entry name" value="P-loop containing nucleotide triphosphate hydrolases"/>
    <property type="match status" value="1"/>
</dbReference>
<dbReference type="Gene3D" id="2.40.30.10">
    <property type="entry name" value="Translation factors"/>
    <property type="match status" value="2"/>
</dbReference>
<dbReference type="HAMAP" id="MF_00118_B">
    <property type="entry name" value="EF_Tu_B"/>
    <property type="match status" value="1"/>
</dbReference>
<dbReference type="InterPro" id="IPR041709">
    <property type="entry name" value="EF-Tu_GTP-bd"/>
</dbReference>
<dbReference type="InterPro" id="IPR050055">
    <property type="entry name" value="EF-Tu_GTPase"/>
</dbReference>
<dbReference type="InterPro" id="IPR004161">
    <property type="entry name" value="EFTu-like_2"/>
</dbReference>
<dbReference type="InterPro" id="IPR033720">
    <property type="entry name" value="EFTU_2"/>
</dbReference>
<dbReference type="InterPro" id="IPR031157">
    <property type="entry name" value="G_TR_CS"/>
</dbReference>
<dbReference type="InterPro" id="IPR027417">
    <property type="entry name" value="P-loop_NTPase"/>
</dbReference>
<dbReference type="InterPro" id="IPR005225">
    <property type="entry name" value="Small_GTP-bd"/>
</dbReference>
<dbReference type="InterPro" id="IPR000795">
    <property type="entry name" value="T_Tr_GTP-bd_dom"/>
</dbReference>
<dbReference type="InterPro" id="IPR009000">
    <property type="entry name" value="Transl_B-barrel_sf"/>
</dbReference>
<dbReference type="InterPro" id="IPR009001">
    <property type="entry name" value="Transl_elong_EF1A/Init_IF2_C"/>
</dbReference>
<dbReference type="InterPro" id="IPR004541">
    <property type="entry name" value="Transl_elong_EFTu/EF1A_bac/org"/>
</dbReference>
<dbReference type="InterPro" id="IPR004160">
    <property type="entry name" value="Transl_elong_EFTu/EF1A_C"/>
</dbReference>
<dbReference type="NCBIfam" id="TIGR00485">
    <property type="entry name" value="EF-Tu"/>
    <property type="match status" value="1"/>
</dbReference>
<dbReference type="NCBIfam" id="NF000766">
    <property type="entry name" value="PRK00049.1"/>
    <property type="match status" value="1"/>
</dbReference>
<dbReference type="NCBIfam" id="NF009372">
    <property type="entry name" value="PRK12735.1"/>
    <property type="match status" value="1"/>
</dbReference>
<dbReference type="NCBIfam" id="NF009373">
    <property type="entry name" value="PRK12736.1"/>
    <property type="match status" value="1"/>
</dbReference>
<dbReference type="NCBIfam" id="TIGR00231">
    <property type="entry name" value="small_GTP"/>
    <property type="match status" value="1"/>
</dbReference>
<dbReference type="PANTHER" id="PTHR43721:SF22">
    <property type="entry name" value="ELONGATION FACTOR TU, MITOCHONDRIAL"/>
    <property type="match status" value="1"/>
</dbReference>
<dbReference type="PANTHER" id="PTHR43721">
    <property type="entry name" value="ELONGATION FACTOR TU-RELATED"/>
    <property type="match status" value="1"/>
</dbReference>
<dbReference type="Pfam" id="PF00009">
    <property type="entry name" value="GTP_EFTU"/>
    <property type="match status" value="1"/>
</dbReference>
<dbReference type="Pfam" id="PF03144">
    <property type="entry name" value="GTP_EFTU_D2"/>
    <property type="match status" value="1"/>
</dbReference>
<dbReference type="Pfam" id="PF03143">
    <property type="entry name" value="GTP_EFTU_D3"/>
    <property type="match status" value="1"/>
</dbReference>
<dbReference type="PRINTS" id="PR00315">
    <property type="entry name" value="ELONGATNFCT"/>
</dbReference>
<dbReference type="SUPFAM" id="SSF50465">
    <property type="entry name" value="EF-Tu/eEF-1alpha/eIF2-gamma C-terminal domain"/>
    <property type="match status" value="1"/>
</dbReference>
<dbReference type="SUPFAM" id="SSF52540">
    <property type="entry name" value="P-loop containing nucleoside triphosphate hydrolases"/>
    <property type="match status" value="1"/>
</dbReference>
<dbReference type="SUPFAM" id="SSF50447">
    <property type="entry name" value="Translation proteins"/>
    <property type="match status" value="1"/>
</dbReference>
<dbReference type="PROSITE" id="PS00301">
    <property type="entry name" value="G_TR_1"/>
    <property type="match status" value="1"/>
</dbReference>
<dbReference type="PROSITE" id="PS51722">
    <property type="entry name" value="G_TR_2"/>
    <property type="match status" value="1"/>
</dbReference>
<proteinExistence type="inferred from homology"/>
<accession>P50062</accession>
<keyword id="KW-0963">Cytoplasm</keyword>
<keyword id="KW-0251">Elongation factor</keyword>
<keyword id="KW-0342">GTP-binding</keyword>
<keyword id="KW-0378">Hydrolase</keyword>
<keyword id="KW-0460">Magnesium</keyword>
<keyword id="KW-0479">Metal-binding</keyword>
<keyword id="KW-0547">Nucleotide-binding</keyword>
<keyword id="KW-0648">Protein biosynthesis</keyword>
<keyword id="KW-1185">Reference proteome</keyword>
<reference key="1">
    <citation type="submission" date="1996-12" db="EMBL/GenBank/DDBJ databases">
        <authorList>
            <person name="Perlee L."/>
            <person name="Qi H."/>
            <person name="Schwartz I."/>
        </authorList>
    </citation>
    <scope>NUCLEOTIDE SEQUENCE [GENOMIC DNA]</scope>
    <source>
        <strain>ATCC 35210 / DSM 4680 / CIP 102532 / B31</strain>
    </source>
</reference>
<reference key="2">
    <citation type="journal article" date="1997" name="Nature">
        <title>Genomic sequence of a Lyme disease spirochaete, Borrelia burgdorferi.</title>
        <authorList>
            <person name="Fraser C.M."/>
            <person name="Casjens S."/>
            <person name="Huang W.M."/>
            <person name="Sutton G.G."/>
            <person name="Clayton R.A."/>
            <person name="Lathigra R."/>
            <person name="White O."/>
            <person name="Ketchum K.A."/>
            <person name="Dodson R.J."/>
            <person name="Hickey E.K."/>
            <person name="Gwinn M.L."/>
            <person name="Dougherty B.A."/>
            <person name="Tomb J.-F."/>
            <person name="Fleischmann R.D."/>
            <person name="Richardson D.L."/>
            <person name="Peterson J.D."/>
            <person name="Kerlavage A.R."/>
            <person name="Quackenbush J."/>
            <person name="Salzberg S.L."/>
            <person name="Hanson M."/>
            <person name="van Vugt R."/>
            <person name="Palmer N."/>
            <person name="Adams M.D."/>
            <person name="Gocayne J.D."/>
            <person name="Weidman J.F."/>
            <person name="Utterback T.R."/>
            <person name="Watthey L."/>
            <person name="McDonald L.A."/>
            <person name="Artiach P."/>
            <person name="Bowman C."/>
            <person name="Garland S.A."/>
            <person name="Fujii C."/>
            <person name="Cotton M.D."/>
            <person name="Horst K."/>
            <person name="Roberts K.M."/>
            <person name="Hatch B."/>
            <person name="Smith H.O."/>
            <person name="Venter J.C."/>
        </authorList>
    </citation>
    <scope>NUCLEOTIDE SEQUENCE [LARGE SCALE GENOMIC DNA]</scope>
    <source>
        <strain>ATCC 35210 / DSM 4680 / CIP 102532 / B31</strain>
    </source>
</reference>
<protein>
    <recommendedName>
        <fullName evidence="2">Elongation factor Tu</fullName>
        <shortName evidence="2">EF-Tu</shortName>
        <ecNumber evidence="2">3.6.5.3</ecNumber>
    </recommendedName>
</protein>
<name>EFTU_BORBU</name>
<feature type="chain" id="PRO_0000091292" description="Elongation factor Tu">
    <location>
        <begin position="1"/>
        <end position="394"/>
    </location>
</feature>
<feature type="domain" description="tr-type G">
    <location>
        <begin position="10"/>
        <end position="205"/>
    </location>
</feature>
<feature type="region of interest" description="G1" evidence="1">
    <location>
        <begin position="19"/>
        <end position="26"/>
    </location>
</feature>
<feature type="region of interest" description="G2" evidence="1">
    <location>
        <begin position="61"/>
        <end position="65"/>
    </location>
</feature>
<feature type="region of interest" description="G3" evidence="1">
    <location>
        <begin position="82"/>
        <end position="85"/>
    </location>
</feature>
<feature type="region of interest" description="G4" evidence="1">
    <location>
        <begin position="137"/>
        <end position="140"/>
    </location>
</feature>
<feature type="region of interest" description="G5" evidence="1">
    <location>
        <begin position="173"/>
        <end position="175"/>
    </location>
</feature>
<feature type="binding site" evidence="2">
    <location>
        <begin position="19"/>
        <end position="26"/>
    </location>
    <ligand>
        <name>GTP</name>
        <dbReference type="ChEBI" id="CHEBI:37565"/>
    </ligand>
</feature>
<feature type="binding site" evidence="2">
    <location>
        <position position="26"/>
    </location>
    <ligand>
        <name>Mg(2+)</name>
        <dbReference type="ChEBI" id="CHEBI:18420"/>
    </ligand>
</feature>
<feature type="binding site" evidence="2">
    <location>
        <begin position="82"/>
        <end position="86"/>
    </location>
    <ligand>
        <name>GTP</name>
        <dbReference type="ChEBI" id="CHEBI:37565"/>
    </ligand>
</feature>
<feature type="binding site" evidence="2">
    <location>
        <begin position="137"/>
        <end position="140"/>
    </location>
    <ligand>
        <name>GTP</name>
        <dbReference type="ChEBI" id="CHEBI:37565"/>
    </ligand>
</feature>
<organism>
    <name type="scientific">Borreliella burgdorferi (strain ATCC 35210 / DSM 4680 / CIP 102532 / B31)</name>
    <name type="common">Borrelia burgdorferi</name>
    <dbReference type="NCBI Taxonomy" id="224326"/>
    <lineage>
        <taxon>Bacteria</taxon>
        <taxon>Pseudomonadati</taxon>
        <taxon>Spirochaetota</taxon>
        <taxon>Spirochaetia</taxon>
        <taxon>Spirochaetales</taxon>
        <taxon>Borreliaceae</taxon>
        <taxon>Borreliella</taxon>
    </lineage>
</organism>
<evidence type="ECO:0000250" key="1"/>
<evidence type="ECO:0000255" key="2">
    <source>
        <dbReference type="HAMAP-Rule" id="MF_00118"/>
    </source>
</evidence>